<name>PFKA_STRA5</name>
<dbReference type="EC" id="2.7.1.11" evidence="1"/>
<dbReference type="EMBL" id="AE009948">
    <property type="protein sequence ID" value="AAM99824.1"/>
    <property type="molecule type" value="Genomic_DNA"/>
</dbReference>
<dbReference type="RefSeq" id="NP_687952.1">
    <property type="nucleotide sequence ID" value="NC_004116.1"/>
</dbReference>
<dbReference type="RefSeq" id="WP_000820831.1">
    <property type="nucleotide sequence ID" value="NC_004116.1"/>
</dbReference>
<dbReference type="SMR" id="P65697"/>
<dbReference type="STRING" id="208435.SAG0940"/>
<dbReference type="KEGG" id="sag:SAG0940"/>
<dbReference type="PATRIC" id="fig|208435.3.peg.945"/>
<dbReference type="HOGENOM" id="CLU_020655_0_1_9"/>
<dbReference type="OrthoDB" id="9802503at2"/>
<dbReference type="UniPathway" id="UPA00109">
    <property type="reaction ID" value="UER00182"/>
</dbReference>
<dbReference type="Proteomes" id="UP000000821">
    <property type="component" value="Chromosome"/>
</dbReference>
<dbReference type="GO" id="GO:0005945">
    <property type="term" value="C:6-phosphofructokinase complex"/>
    <property type="evidence" value="ECO:0007669"/>
    <property type="project" value="TreeGrafter"/>
</dbReference>
<dbReference type="GO" id="GO:0003872">
    <property type="term" value="F:6-phosphofructokinase activity"/>
    <property type="evidence" value="ECO:0007669"/>
    <property type="project" value="UniProtKB-UniRule"/>
</dbReference>
<dbReference type="GO" id="GO:0016208">
    <property type="term" value="F:AMP binding"/>
    <property type="evidence" value="ECO:0007669"/>
    <property type="project" value="TreeGrafter"/>
</dbReference>
<dbReference type="GO" id="GO:0005524">
    <property type="term" value="F:ATP binding"/>
    <property type="evidence" value="ECO:0007669"/>
    <property type="project" value="UniProtKB-KW"/>
</dbReference>
<dbReference type="GO" id="GO:0070095">
    <property type="term" value="F:fructose-6-phosphate binding"/>
    <property type="evidence" value="ECO:0007669"/>
    <property type="project" value="TreeGrafter"/>
</dbReference>
<dbReference type="GO" id="GO:0042802">
    <property type="term" value="F:identical protein binding"/>
    <property type="evidence" value="ECO:0007669"/>
    <property type="project" value="TreeGrafter"/>
</dbReference>
<dbReference type="GO" id="GO:0046872">
    <property type="term" value="F:metal ion binding"/>
    <property type="evidence" value="ECO:0007669"/>
    <property type="project" value="UniProtKB-KW"/>
</dbReference>
<dbReference type="GO" id="GO:0048029">
    <property type="term" value="F:monosaccharide binding"/>
    <property type="evidence" value="ECO:0007669"/>
    <property type="project" value="TreeGrafter"/>
</dbReference>
<dbReference type="GO" id="GO:0061621">
    <property type="term" value="P:canonical glycolysis"/>
    <property type="evidence" value="ECO:0007669"/>
    <property type="project" value="TreeGrafter"/>
</dbReference>
<dbReference type="GO" id="GO:0030388">
    <property type="term" value="P:fructose 1,6-bisphosphate metabolic process"/>
    <property type="evidence" value="ECO:0007669"/>
    <property type="project" value="TreeGrafter"/>
</dbReference>
<dbReference type="GO" id="GO:0006002">
    <property type="term" value="P:fructose 6-phosphate metabolic process"/>
    <property type="evidence" value="ECO:0007669"/>
    <property type="project" value="InterPro"/>
</dbReference>
<dbReference type="FunFam" id="3.40.50.450:FF:000001">
    <property type="entry name" value="ATP-dependent 6-phosphofructokinase"/>
    <property type="match status" value="1"/>
</dbReference>
<dbReference type="FunFam" id="3.40.50.460:FF:000002">
    <property type="entry name" value="ATP-dependent 6-phosphofructokinase"/>
    <property type="match status" value="1"/>
</dbReference>
<dbReference type="Gene3D" id="3.40.50.450">
    <property type="match status" value="1"/>
</dbReference>
<dbReference type="Gene3D" id="3.40.50.460">
    <property type="entry name" value="Phosphofructokinase domain"/>
    <property type="match status" value="1"/>
</dbReference>
<dbReference type="HAMAP" id="MF_00339">
    <property type="entry name" value="Phosphofructokinase_I_B1"/>
    <property type="match status" value="1"/>
</dbReference>
<dbReference type="InterPro" id="IPR022953">
    <property type="entry name" value="ATP_PFK"/>
</dbReference>
<dbReference type="InterPro" id="IPR012003">
    <property type="entry name" value="ATP_PFK_prok-type"/>
</dbReference>
<dbReference type="InterPro" id="IPR012828">
    <property type="entry name" value="PFKA_ATP_prok"/>
</dbReference>
<dbReference type="InterPro" id="IPR015912">
    <property type="entry name" value="Phosphofructokinase_CS"/>
</dbReference>
<dbReference type="InterPro" id="IPR000023">
    <property type="entry name" value="Phosphofructokinase_dom"/>
</dbReference>
<dbReference type="InterPro" id="IPR035966">
    <property type="entry name" value="PKF_sf"/>
</dbReference>
<dbReference type="NCBIfam" id="TIGR02482">
    <property type="entry name" value="PFKA_ATP"/>
    <property type="match status" value="1"/>
</dbReference>
<dbReference type="NCBIfam" id="NF002872">
    <property type="entry name" value="PRK03202.1"/>
    <property type="match status" value="1"/>
</dbReference>
<dbReference type="PANTHER" id="PTHR13697:SF4">
    <property type="entry name" value="ATP-DEPENDENT 6-PHOSPHOFRUCTOKINASE"/>
    <property type="match status" value="1"/>
</dbReference>
<dbReference type="PANTHER" id="PTHR13697">
    <property type="entry name" value="PHOSPHOFRUCTOKINASE"/>
    <property type="match status" value="1"/>
</dbReference>
<dbReference type="Pfam" id="PF00365">
    <property type="entry name" value="PFK"/>
    <property type="match status" value="1"/>
</dbReference>
<dbReference type="PIRSF" id="PIRSF000532">
    <property type="entry name" value="ATP_PFK_prok"/>
    <property type="match status" value="1"/>
</dbReference>
<dbReference type="PRINTS" id="PR00476">
    <property type="entry name" value="PHFRCTKINASE"/>
</dbReference>
<dbReference type="SUPFAM" id="SSF53784">
    <property type="entry name" value="Phosphofructokinase"/>
    <property type="match status" value="1"/>
</dbReference>
<dbReference type="PROSITE" id="PS00433">
    <property type="entry name" value="PHOSPHOFRUCTOKINASE"/>
    <property type="match status" value="1"/>
</dbReference>
<organism>
    <name type="scientific">Streptococcus agalactiae serotype V (strain ATCC BAA-611 / 2603 V/R)</name>
    <dbReference type="NCBI Taxonomy" id="208435"/>
    <lineage>
        <taxon>Bacteria</taxon>
        <taxon>Bacillati</taxon>
        <taxon>Bacillota</taxon>
        <taxon>Bacilli</taxon>
        <taxon>Lactobacillales</taxon>
        <taxon>Streptococcaceae</taxon>
        <taxon>Streptococcus</taxon>
    </lineage>
</organism>
<reference key="1">
    <citation type="journal article" date="2002" name="Proc. Natl. Acad. Sci. U.S.A.">
        <title>Complete genome sequence and comparative genomic analysis of an emerging human pathogen, serotype V Streptococcus agalactiae.</title>
        <authorList>
            <person name="Tettelin H."/>
            <person name="Masignani V."/>
            <person name="Cieslewicz M.J."/>
            <person name="Eisen J.A."/>
            <person name="Peterson S.N."/>
            <person name="Wessels M.R."/>
            <person name="Paulsen I.T."/>
            <person name="Nelson K.E."/>
            <person name="Margarit I."/>
            <person name="Read T.D."/>
            <person name="Madoff L.C."/>
            <person name="Wolf A.M."/>
            <person name="Beanan M.J."/>
            <person name="Brinkac L.M."/>
            <person name="Daugherty S.C."/>
            <person name="DeBoy R.T."/>
            <person name="Durkin A.S."/>
            <person name="Kolonay J.F."/>
            <person name="Madupu R."/>
            <person name="Lewis M.R."/>
            <person name="Radune D."/>
            <person name="Fedorova N.B."/>
            <person name="Scanlan D."/>
            <person name="Khouri H.M."/>
            <person name="Mulligan S."/>
            <person name="Carty H.A."/>
            <person name="Cline R.T."/>
            <person name="Van Aken S.E."/>
            <person name="Gill J."/>
            <person name="Scarselli M."/>
            <person name="Mora M."/>
            <person name="Iacobini E.T."/>
            <person name="Brettoni C."/>
            <person name="Galli G."/>
            <person name="Mariani M."/>
            <person name="Vegni F."/>
            <person name="Maione D."/>
            <person name="Rinaudo D."/>
            <person name="Rappuoli R."/>
            <person name="Telford J.L."/>
            <person name="Kasper D.L."/>
            <person name="Grandi G."/>
            <person name="Fraser C.M."/>
        </authorList>
    </citation>
    <scope>NUCLEOTIDE SEQUENCE [LARGE SCALE GENOMIC DNA]</scope>
    <source>
        <strain>ATCC BAA-611 / 2603 V/R</strain>
    </source>
</reference>
<accession>P65697</accession>
<accession>Q8E001</accession>
<accession>Q8E5Q1</accession>
<evidence type="ECO:0000255" key="1">
    <source>
        <dbReference type="HAMAP-Rule" id="MF_00339"/>
    </source>
</evidence>
<feature type="chain" id="PRO_0000111985" description="ATP-dependent 6-phosphofructokinase">
    <location>
        <begin position="1"/>
        <end position="340"/>
    </location>
</feature>
<feature type="active site" description="Proton acceptor" evidence="1">
    <location>
        <position position="127"/>
    </location>
</feature>
<feature type="binding site" evidence="1">
    <location>
        <position position="11"/>
    </location>
    <ligand>
        <name>ATP</name>
        <dbReference type="ChEBI" id="CHEBI:30616"/>
    </ligand>
</feature>
<feature type="binding site" evidence="1">
    <location>
        <begin position="21"/>
        <end position="25"/>
    </location>
    <ligand>
        <name>ADP</name>
        <dbReference type="ChEBI" id="CHEBI:456216"/>
        <note>allosteric activator; ligand shared between dimeric partners</note>
    </ligand>
</feature>
<feature type="binding site" evidence="1">
    <location>
        <begin position="72"/>
        <end position="73"/>
    </location>
    <ligand>
        <name>ATP</name>
        <dbReference type="ChEBI" id="CHEBI:30616"/>
    </ligand>
</feature>
<feature type="binding site" evidence="1">
    <location>
        <begin position="102"/>
        <end position="105"/>
    </location>
    <ligand>
        <name>ATP</name>
        <dbReference type="ChEBI" id="CHEBI:30616"/>
    </ligand>
</feature>
<feature type="binding site" evidence="1">
    <location>
        <position position="103"/>
    </location>
    <ligand>
        <name>Mg(2+)</name>
        <dbReference type="ChEBI" id="CHEBI:18420"/>
        <note>catalytic</note>
    </ligand>
</feature>
<feature type="binding site" description="in other chain" evidence="1">
    <location>
        <begin position="125"/>
        <end position="127"/>
    </location>
    <ligand>
        <name>substrate</name>
        <note>ligand shared between dimeric partners</note>
    </ligand>
</feature>
<feature type="binding site" description="in other chain" evidence="1">
    <location>
        <position position="154"/>
    </location>
    <ligand>
        <name>ADP</name>
        <dbReference type="ChEBI" id="CHEBI:456216"/>
        <note>allosteric activator; ligand shared between dimeric partners</note>
    </ligand>
</feature>
<feature type="binding site" evidence="1">
    <location>
        <position position="162"/>
    </location>
    <ligand>
        <name>substrate</name>
        <note>ligand shared between dimeric partners</note>
    </ligand>
</feature>
<feature type="binding site" description="in other chain" evidence="1">
    <location>
        <begin position="169"/>
        <end position="171"/>
    </location>
    <ligand>
        <name>substrate</name>
        <note>ligand shared between dimeric partners</note>
    </ligand>
</feature>
<feature type="binding site" description="in other chain" evidence="1">
    <location>
        <begin position="185"/>
        <end position="187"/>
    </location>
    <ligand>
        <name>ADP</name>
        <dbReference type="ChEBI" id="CHEBI:456216"/>
        <note>allosteric activator; ligand shared between dimeric partners</note>
    </ligand>
</feature>
<feature type="binding site" description="in other chain" evidence="1">
    <location>
        <begin position="213"/>
        <end position="215"/>
    </location>
    <ligand>
        <name>ADP</name>
        <dbReference type="ChEBI" id="CHEBI:456216"/>
        <note>allosteric activator; ligand shared between dimeric partners</note>
    </ligand>
</feature>
<feature type="binding site" description="in other chain" evidence="1">
    <location>
        <position position="222"/>
    </location>
    <ligand>
        <name>substrate</name>
        <note>ligand shared between dimeric partners</note>
    </ligand>
</feature>
<feature type="binding site" evidence="1">
    <location>
        <position position="244"/>
    </location>
    <ligand>
        <name>substrate</name>
        <note>ligand shared between dimeric partners</note>
    </ligand>
</feature>
<feature type="binding site" description="in other chain" evidence="1">
    <location>
        <begin position="250"/>
        <end position="253"/>
    </location>
    <ligand>
        <name>substrate</name>
        <note>ligand shared between dimeric partners</note>
    </ligand>
</feature>
<sequence length="340" mass="35969">MKRIAVLTSGGDAPGMNAAIRAVVRKAISEGMEVYGINQGYYGMVTGDIFPLDANSVGDTINRGGTFLRSARYPEFAELEGQLKGIEQLKKHGIEGVVVIGGDGSYHGAMRLTEHGFPAVGLPGTIDNDIVGTDYTIGFDTAVATAVENLDRLRDTSASHNRTFVVEVMGRNAGDIALWSGIAAGADQIIVPEEEFNIDEVVSNVRAGYAAGKHHQIIVLAEGVMSGDEFAKTMKAAGDDSDLRVTNLGHLLRGGSPTARDRVLASRMGAYAVQLLKEGRGGLAVGVHNEEMVESPILGLAEEGALFSLTDEGKIVVNNPHKADLRLAALNRDLANQSSK</sequence>
<proteinExistence type="inferred from homology"/>
<keyword id="KW-0021">Allosteric enzyme</keyword>
<keyword id="KW-0067">ATP-binding</keyword>
<keyword id="KW-0963">Cytoplasm</keyword>
<keyword id="KW-0324">Glycolysis</keyword>
<keyword id="KW-0418">Kinase</keyword>
<keyword id="KW-0460">Magnesium</keyword>
<keyword id="KW-0479">Metal-binding</keyword>
<keyword id="KW-0547">Nucleotide-binding</keyword>
<keyword id="KW-1185">Reference proteome</keyword>
<keyword id="KW-0808">Transferase</keyword>
<protein>
    <recommendedName>
        <fullName evidence="1">ATP-dependent 6-phosphofructokinase</fullName>
        <shortName evidence="1">ATP-PFK</shortName>
        <shortName evidence="1">Phosphofructokinase</shortName>
        <ecNumber evidence="1">2.7.1.11</ecNumber>
    </recommendedName>
    <alternativeName>
        <fullName evidence="1">Phosphohexokinase</fullName>
    </alternativeName>
</protein>
<gene>
    <name evidence="1" type="primary">pfkA</name>
    <name type="synonym">pfk</name>
    <name type="ordered locus">SAG0940</name>
</gene>
<comment type="function">
    <text evidence="1">Catalyzes the phosphorylation of D-fructose 6-phosphate to fructose 1,6-bisphosphate by ATP, the first committing step of glycolysis.</text>
</comment>
<comment type="catalytic activity">
    <reaction evidence="1">
        <text>beta-D-fructose 6-phosphate + ATP = beta-D-fructose 1,6-bisphosphate + ADP + H(+)</text>
        <dbReference type="Rhea" id="RHEA:16109"/>
        <dbReference type="ChEBI" id="CHEBI:15378"/>
        <dbReference type="ChEBI" id="CHEBI:30616"/>
        <dbReference type="ChEBI" id="CHEBI:32966"/>
        <dbReference type="ChEBI" id="CHEBI:57634"/>
        <dbReference type="ChEBI" id="CHEBI:456216"/>
        <dbReference type="EC" id="2.7.1.11"/>
    </reaction>
</comment>
<comment type="cofactor">
    <cofactor evidence="1">
        <name>Mg(2+)</name>
        <dbReference type="ChEBI" id="CHEBI:18420"/>
    </cofactor>
</comment>
<comment type="activity regulation">
    <text evidence="1">Allosterically activated by ADP and other diphosphonucleosides, and allosterically inhibited by phosphoenolpyruvate.</text>
</comment>
<comment type="pathway">
    <text evidence="1">Carbohydrate degradation; glycolysis; D-glyceraldehyde 3-phosphate and glycerone phosphate from D-glucose: step 3/4.</text>
</comment>
<comment type="subunit">
    <text evidence="1">Homotetramer.</text>
</comment>
<comment type="subcellular location">
    <subcellularLocation>
        <location evidence="1">Cytoplasm</location>
    </subcellularLocation>
</comment>
<comment type="similarity">
    <text evidence="1">Belongs to the phosphofructokinase type A (PFKA) family. ATP-dependent PFK group I subfamily. Prokaryotic clade 'B1' sub-subfamily.</text>
</comment>